<sequence>MEEEDESRGKTEESGEDRGDGPPDRDPALSPSAFILRAIQQAVGSSLQGDLPNDKDGSRCCGLQWRRCCRSPRSEPRSQESGGADMATVLDTAADSFLVELVSILDPPDTWVPSHLDLQPGESEDVLELVAEVRIGDRDPMPLPVPSLLPRLRAWRTGKTVSPQSHASRPACSRHLLTLGTGDGGPAPPPAPSSASSSPSPSPSSSSPSPPPPPPPPPPPALPAPRFDIYDPFHPTDEAYSPPPAPEQKYDPFEPTGSNPSSSAGTPSPEEEEEEEEEEEEEGLSQSISRISETLAGIYDDNSLSQDFPGDDSPHREPPPPQTLGAPGTPPQADSTRAEGAPRRRVFVVGPEAEACLEGKVSVEVVTTAGGPALPLPPLPPTDPEIEEGEIVQPEEEPRVAVSLFRAARPRQPPASVATLASVAAPAAPPASAPRAPEGDDFLSLHADSDGEGALQVDLGEPPAPPAADARWGGLDLRRKILTQRRERYRQRSASPGPPPARKKARRERQRSGDPAPPDSPTWEAKKHRSRERKLGSHSTARRRSRSRSRRRSRSRSADRRRGSHRSRSREKRRRRRRSASPPPAASSSSSSRRERHRGKRREGGKKKKKRSRSRAEKRSGDLEKLPAPVPPSGSDRDSRRRGAVPPSIQDLTDHDLFAIKRTITVGRPDKTEPRAPSPAPAVSPKREVLYDSEGLSADERGAKGDKDRRRSGAASSSSSSREKASRRKALDGDRGRDRDRSSKKTRPPKDSAPGSGALPKAPPSSGSSSSSSSCSSRKVKLQSKVAVLIREGVSSTTPAKDSSSSGLGSIGVKFSRDRESRSPFLKPDERAPAEGVKVAPGSTKPKKTKAKAKAGAKKAKGTKGKTKPSKTRKKVRSGGSSTASGGPGSLKKSKADSCSQAASAKGTEETSWSGEERTTKAPSTPPPKVAPPPPALTPDSQTVDSSCKTPEVSFLPEEASEDTGVRVGAEEEEEEEEEEEEEEEQQPATTTATSTAAAAPSTAPSAGSTAGDSGAEDGPAARASQLPTLPPPMPWNLPAGVDCTTSGVLALTALLFKMEEANLASRAKAQELIQATNQILSHRKPPSTLGVTPAPVPTSLGLPPGPSSYLLPGSLPIGGCGSTPPTPTGLVPASDKREGSSSSEGRGDTDKYLKKLHTQERAVEEVKLAIKPYYQKKDITKEEYKDILRKAVHKICHSKSGEINPVKVSNLVRAYVQRYRYFRKHGRKPGDPPGPPRPPKEPGPPDKGGPGLPLPPL</sequence>
<proteinExistence type="evidence at protein level"/>
<comment type="function">
    <text evidence="5">May function in pre-mRNA splicing.</text>
</comment>
<comment type="subunit">
    <text evidence="5">Interacts with POLR2A.</text>
</comment>
<comment type="subcellular location">
    <subcellularLocation>
        <location evidence="6">Nucleus</location>
    </subcellularLocation>
</comment>
<comment type="similarity">
    <text evidence="6">Belongs to the splicing factor SR family.</text>
</comment>
<comment type="sequence caution" evidence="6">
    <conflict type="erroneous initiation">
        <sequence resource="EMBL-CDS" id="AAC52657"/>
    </conflict>
</comment>
<reference key="1">
    <citation type="journal article" date="2004" name="Nature">
        <title>Genome sequence of the Brown Norway rat yields insights into mammalian evolution.</title>
        <authorList>
            <person name="Gibbs R.A."/>
            <person name="Weinstock G.M."/>
            <person name="Metzker M.L."/>
            <person name="Muzny D.M."/>
            <person name="Sodergren E.J."/>
            <person name="Scherer S."/>
            <person name="Scott G."/>
            <person name="Steffen D."/>
            <person name="Worley K.C."/>
            <person name="Burch P.E."/>
            <person name="Okwuonu G."/>
            <person name="Hines S."/>
            <person name="Lewis L."/>
            <person name="Deramo C."/>
            <person name="Delgado O."/>
            <person name="Dugan-Rocha S."/>
            <person name="Miner G."/>
            <person name="Morgan M."/>
            <person name="Hawes A."/>
            <person name="Gill R."/>
            <person name="Holt R.A."/>
            <person name="Adams M.D."/>
            <person name="Amanatides P.G."/>
            <person name="Baden-Tillson H."/>
            <person name="Barnstead M."/>
            <person name="Chin S."/>
            <person name="Evans C.A."/>
            <person name="Ferriera S."/>
            <person name="Fosler C."/>
            <person name="Glodek A."/>
            <person name="Gu Z."/>
            <person name="Jennings D."/>
            <person name="Kraft C.L."/>
            <person name="Nguyen T."/>
            <person name="Pfannkoch C.M."/>
            <person name="Sitter C."/>
            <person name="Sutton G.G."/>
            <person name="Venter J.C."/>
            <person name="Woodage T."/>
            <person name="Smith D."/>
            <person name="Lee H.-M."/>
            <person name="Gustafson E."/>
            <person name="Cahill P."/>
            <person name="Kana A."/>
            <person name="Doucette-Stamm L."/>
            <person name="Weinstock K."/>
            <person name="Fechtel K."/>
            <person name="Weiss R.B."/>
            <person name="Dunn D.M."/>
            <person name="Green E.D."/>
            <person name="Blakesley R.W."/>
            <person name="Bouffard G.G."/>
            <person name="De Jong P.J."/>
            <person name="Osoegawa K."/>
            <person name="Zhu B."/>
            <person name="Marra M."/>
            <person name="Schein J."/>
            <person name="Bosdet I."/>
            <person name="Fjell C."/>
            <person name="Jones S."/>
            <person name="Krzywinski M."/>
            <person name="Mathewson C."/>
            <person name="Siddiqui A."/>
            <person name="Wye N."/>
            <person name="McPherson J."/>
            <person name="Zhao S."/>
            <person name="Fraser C.M."/>
            <person name="Shetty J."/>
            <person name="Shatsman S."/>
            <person name="Geer K."/>
            <person name="Chen Y."/>
            <person name="Abramzon S."/>
            <person name="Nierman W.C."/>
            <person name="Havlak P.H."/>
            <person name="Chen R."/>
            <person name="Durbin K.J."/>
            <person name="Egan A."/>
            <person name="Ren Y."/>
            <person name="Song X.-Z."/>
            <person name="Li B."/>
            <person name="Liu Y."/>
            <person name="Qin X."/>
            <person name="Cawley S."/>
            <person name="Cooney A.J."/>
            <person name="D'Souza L.M."/>
            <person name="Martin K."/>
            <person name="Wu J.Q."/>
            <person name="Gonzalez-Garay M.L."/>
            <person name="Jackson A.R."/>
            <person name="Kalafus K.J."/>
            <person name="McLeod M.P."/>
            <person name="Milosavljevic A."/>
            <person name="Virk D."/>
            <person name="Volkov A."/>
            <person name="Wheeler D.A."/>
            <person name="Zhang Z."/>
            <person name="Bailey J.A."/>
            <person name="Eichler E.E."/>
            <person name="Tuzun E."/>
            <person name="Birney E."/>
            <person name="Mongin E."/>
            <person name="Ureta-Vidal A."/>
            <person name="Woodwark C."/>
            <person name="Zdobnov E."/>
            <person name="Bork P."/>
            <person name="Suyama M."/>
            <person name="Torrents D."/>
            <person name="Alexandersson M."/>
            <person name="Trask B.J."/>
            <person name="Young J.M."/>
            <person name="Huang H."/>
            <person name="Wang H."/>
            <person name="Xing H."/>
            <person name="Daniels S."/>
            <person name="Gietzen D."/>
            <person name="Schmidt J."/>
            <person name="Stevens K."/>
            <person name="Vitt U."/>
            <person name="Wingrove J."/>
            <person name="Camara F."/>
            <person name="Mar Alba M."/>
            <person name="Abril J.F."/>
            <person name="Guigo R."/>
            <person name="Smit A."/>
            <person name="Dubchak I."/>
            <person name="Rubin E.M."/>
            <person name="Couronne O."/>
            <person name="Poliakov A."/>
            <person name="Huebner N."/>
            <person name="Ganten D."/>
            <person name="Goesele C."/>
            <person name="Hummel O."/>
            <person name="Kreitler T."/>
            <person name="Lee Y.-A."/>
            <person name="Monti J."/>
            <person name="Schulz H."/>
            <person name="Zimdahl H."/>
            <person name="Himmelbauer H."/>
            <person name="Lehrach H."/>
            <person name="Jacob H.J."/>
            <person name="Bromberg S."/>
            <person name="Gullings-Handley J."/>
            <person name="Jensen-Seaman M.I."/>
            <person name="Kwitek A.E."/>
            <person name="Lazar J."/>
            <person name="Pasko D."/>
            <person name="Tonellato P.J."/>
            <person name="Twigger S."/>
            <person name="Ponting C.P."/>
            <person name="Duarte J.M."/>
            <person name="Rice S."/>
            <person name="Goodstadt L."/>
            <person name="Beatson S.A."/>
            <person name="Emes R.D."/>
            <person name="Winter E.E."/>
            <person name="Webber C."/>
            <person name="Brandt P."/>
            <person name="Nyakatura G."/>
            <person name="Adetobi M."/>
            <person name="Chiaromonte F."/>
            <person name="Elnitski L."/>
            <person name="Eswara P."/>
            <person name="Hardison R.C."/>
            <person name="Hou M."/>
            <person name="Kolbe D."/>
            <person name="Makova K."/>
            <person name="Miller W."/>
            <person name="Nekrutenko A."/>
            <person name="Riemer C."/>
            <person name="Schwartz S."/>
            <person name="Taylor J."/>
            <person name="Yang S."/>
            <person name="Zhang Y."/>
            <person name="Lindpaintner K."/>
            <person name="Andrews T.D."/>
            <person name="Caccamo M."/>
            <person name="Clamp M."/>
            <person name="Clarke L."/>
            <person name="Curwen V."/>
            <person name="Durbin R.M."/>
            <person name="Eyras E."/>
            <person name="Searle S.M."/>
            <person name="Cooper G.M."/>
            <person name="Batzoglou S."/>
            <person name="Brudno M."/>
            <person name="Sidow A."/>
            <person name="Stone E.A."/>
            <person name="Payseur B.A."/>
            <person name="Bourque G."/>
            <person name="Lopez-Otin C."/>
            <person name="Puente X.S."/>
            <person name="Chakrabarti K."/>
            <person name="Chatterji S."/>
            <person name="Dewey C."/>
            <person name="Pachter L."/>
            <person name="Bray N."/>
            <person name="Yap V.B."/>
            <person name="Caspi A."/>
            <person name="Tesler G."/>
            <person name="Pevzner P.A."/>
            <person name="Haussler D."/>
            <person name="Roskin K.M."/>
            <person name="Baertsch R."/>
            <person name="Clawson H."/>
            <person name="Furey T.S."/>
            <person name="Hinrichs A.S."/>
            <person name="Karolchik D."/>
            <person name="Kent W.J."/>
            <person name="Rosenbloom K.R."/>
            <person name="Trumbower H."/>
            <person name="Weirauch M."/>
            <person name="Cooper D.N."/>
            <person name="Stenson P.D."/>
            <person name="Ma B."/>
            <person name="Brent M."/>
            <person name="Arumugam M."/>
            <person name="Shteynberg D."/>
            <person name="Copley R.R."/>
            <person name="Taylor M.S."/>
            <person name="Riethman H."/>
            <person name="Mudunuri U."/>
            <person name="Peterson J."/>
            <person name="Guyer M."/>
            <person name="Felsenfeld A."/>
            <person name="Old S."/>
            <person name="Mockrin S."/>
            <person name="Collins F.S."/>
        </authorList>
    </citation>
    <scope>NUCLEOTIDE SEQUENCE [LARGE SCALE GENOMIC DNA]</scope>
    <source>
        <strain>Brown Norway</strain>
    </source>
</reference>
<reference key="2">
    <citation type="journal article" date="1996" name="Proc. Natl. Acad. Sci. U.S.A.">
        <title>The C-terminal domain of the largest subunit of RNA polymerase II interacts with a novel set of serine/arginine-rich proteins.</title>
        <authorList>
            <person name="Yuryev A."/>
            <person name="Patturajan M."/>
            <person name="Litingtung Y."/>
            <person name="Joshi R.V."/>
            <person name="Gentile C."/>
            <person name="Gebara M."/>
            <person name="Corden J.L."/>
        </authorList>
    </citation>
    <scope>NUCLEOTIDE SEQUENCE [MRNA] OF 52-1258</scope>
    <scope>FUNCTION</scope>
    <scope>INTERACTION WITH POLR2A</scope>
    <source>
        <tissue>Hippocampus</tissue>
    </source>
</reference>
<reference key="3">
    <citation type="journal article" date="2012" name="Nat. Commun.">
        <title>Quantitative maps of protein phosphorylation sites across 14 different rat organs and tissues.</title>
        <authorList>
            <person name="Lundby A."/>
            <person name="Secher A."/>
            <person name="Lage K."/>
            <person name="Nordsborg N.B."/>
            <person name="Dmytriyev A."/>
            <person name="Lundby C."/>
            <person name="Olsen J.V."/>
        </authorList>
    </citation>
    <scope>PHOSPHORYLATION [LARGE SCALE ANALYSIS] AT SER-241; SER-512; SER-520; SER-678; SER-684; SER-693; SER-697; SER-914 AND THR-950</scope>
    <scope>IDENTIFICATION BY MASS SPECTROMETRY [LARGE SCALE ANALYSIS]</scope>
</reference>
<accession>Q63624</accession>
<evidence type="ECO:0000250" key="1"/>
<evidence type="ECO:0000250" key="2">
    <source>
        <dbReference type="UniProtKB" id="Q5U4C3"/>
    </source>
</evidence>
<evidence type="ECO:0000250" key="3">
    <source>
        <dbReference type="UniProtKB" id="Q9H7N4"/>
    </source>
</evidence>
<evidence type="ECO:0000256" key="4">
    <source>
        <dbReference type="SAM" id="MobiDB-lite"/>
    </source>
</evidence>
<evidence type="ECO:0000269" key="5">
    <source>
    </source>
</evidence>
<evidence type="ECO:0000305" key="6"/>
<evidence type="ECO:0007744" key="7">
    <source>
    </source>
</evidence>
<keyword id="KW-1017">Isopeptide bond</keyword>
<keyword id="KW-0507">mRNA processing</keyword>
<keyword id="KW-0508">mRNA splicing</keyword>
<keyword id="KW-0539">Nucleus</keyword>
<keyword id="KW-0597">Phosphoprotein</keyword>
<keyword id="KW-1185">Reference proteome</keyword>
<keyword id="KW-0677">Repeat</keyword>
<keyword id="KW-0694">RNA-binding</keyword>
<keyword id="KW-0832">Ubl conjugation</keyword>
<name>SFR19_RAT</name>
<organism>
    <name type="scientific">Rattus norvegicus</name>
    <name type="common">Rat</name>
    <dbReference type="NCBI Taxonomy" id="10116"/>
    <lineage>
        <taxon>Eukaryota</taxon>
        <taxon>Metazoa</taxon>
        <taxon>Chordata</taxon>
        <taxon>Craniata</taxon>
        <taxon>Vertebrata</taxon>
        <taxon>Euteleostomi</taxon>
        <taxon>Mammalia</taxon>
        <taxon>Eutheria</taxon>
        <taxon>Euarchontoglires</taxon>
        <taxon>Glires</taxon>
        <taxon>Rodentia</taxon>
        <taxon>Myomorpha</taxon>
        <taxon>Muroidea</taxon>
        <taxon>Muridae</taxon>
        <taxon>Murinae</taxon>
        <taxon>Rattus</taxon>
    </lineage>
</organism>
<dbReference type="EMBL" id="AABR03002356">
    <property type="status" value="NOT_ANNOTATED_CDS"/>
    <property type="molecule type" value="Genomic_DNA"/>
</dbReference>
<dbReference type="EMBL" id="U49056">
    <property type="protein sequence ID" value="AAC52657.1"/>
    <property type="status" value="ALT_INIT"/>
    <property type="molecule type" value="mRNA"/>
</dbReference>
<dbReference type="PIR" id="T31421">
    <property type="entry name" value="T31421"/>
</dbReference>
<dbReference type="RefSeq" id="NP_001387752.1">
    <property type="nucleotide sequence ID" value="NM_001400823.1"/>
</dbReference>
<dbReference type="RefSeq" id="NP_001401129.1">
    <property type="nucleotide sequence ID" value="NM_001414200.1"/>
</dbReference>
<dbReference type="RefSeq" id="NP_062257.2">
    <property type="nucleotide sequence ID" value="NM_019384.2"/>
</dbReference>
<dbReference type="RefSeq" id="XP_008757631.2">
    <property type="nucleotide sequence ID" value="XM_008759409.2"/>
</dbReference>
<dbReference type="RefSeq" id="XP_008757632.1">
    <property type="nucleotide sequence ID" value="XM_008759410.2"/>
</dbReference>
<dbReference type="RefSeq" id="XP_017445105.1">
    <property type="nucleotide sequence ID" value="XM_017589616.1"/>
</dbReference>
<dbReference type="SMR" id="Q63624"/>
<dbReference type="FunCoup" id="Q63624">
    <property type="interactions" value="1612"/>
</dbReference>
<dbReference type="STRING" id="10116.ENSRNOP00000072566"/>
<dbReference type="GlyGen" id="Q63624">
    <property type="glycosylation" value="2 sites"/>
</dbReference>
<dbReference type="iPTMnet" id="Q63624"/>
<dbReference type="PhosphoSitePlus" id="Q63624"/>
<dbReference type="PaxDb" id="10116-ENSRNOP00000027801"/>
<dbReference type="Ensembl" id="ENSRNOT00000081430.2">
    <property type="protein sequence ID" value="ENSRNOP00000072566.1"/>
    <property type="gene ID" value="ENSRNOG00000056946.2"/>
</dbReference>
<dbReference type="GeneID" id="56081"/>
<dbReference type="KEGG" id="rno:56081"/>
<dbReference type="AGR" id="RGD:708405"/>
<dbReference type="CTD" id="58506"/>
<dbReference type="RGD" id="708405">
    <property type="gene designation" value="Scaf1"/>
</dbReference>
<dbReference type="eggNOG" id="KOG0825">
    <property type="taxonomic scope" value="Eukaryota"/>
</dbReference>
<dbReference type="GeneTree" id="ENSGT00950000183205"/>
<dbReference type="HOGENOM" id="CLU_006936_0_0_1"/>
<dbReference type="InParanoid" id="Q63624"/>
<dbReference type="OMA" id="ADTRWGG"/>
<dbReference type="OrthoDB" id="1935339at2759"/>
<dbReference type="PhylomeDB" id="Q63624"/>
<dbReference type="TreeFam" id="TF332183"/>
<dbReference type="PRO" id="PR:Q63624"/>
<dbReference type="Proteomes" id="UP000002494">
    <property type="component" value="Chromosome 1"/>
</dbReference>
<dbReference type="Bgee" id="ENSRNOG00000056946">
    <property type="expression patterns" value="Expressed in frontal cortex and 19 other cell types or tissues"/>
</dbReference>
<dbReference type="GO" id="GO:0005634">
    <property type="term" value="C:nucleus"/>
    <property type="evidence" value="ECO:0007669"/>
    <property type="project" value="UniProtKB-SubCell"/>
</dbReference>
<dbReference type="GO" id="GO:0019904">
    <property type="term" value="F:protein domain specific binding"/>
    <property type="evidence" value="ECO:0000315"/>
    <property type="project" value="RGD"/>
</dbReference>
<dbReference type="GO" id="GO:0003723">
    <property type="term" value="F:RNA binding"/>
    <property type="evidence" value="ECO:0007669"/>
    <property type="project" value="UniProtKB-KW"/>
</dbReference>
<dbReference type="GO" id="GO:0099122">
    <property type="term" value="F:RNA polymerase II C-terminal domain binding"/>
    <property type="evidence" value="ECO:0000266"/>
    <property type="project" value="RGD"/>
</dbReference>
<dbReference type="GO" id="GO:0006397">
    <property type="term" value="P:mRNA processing"/>
    <property type="evidence" value="ECO:0000315"/>
    <property type="project" value="RGD"/>
</dbReference>
<dbReference type="GO" id="GO:0008380">
    <property type="term" value="P:RNA splicing"/>
    <property type="evidence" value="ECO:0007669"/>
    <property type="project" value="UniProtKB-KW"/>
</dbReference>
<dbReference type="GO" id="GO:0006366">
    <property type="term" value="P:transcription by RNA polymerase II"/>
    <property type="evidence" value="ECO:0000315"/>
    <property type="project" value="RGD"/>
</dbReference>
<dbReference type="InterPro" id="IPR042841">
    <property type="entry name" value="SCAF1"/>
</dbReference>
<dbReference type="InterPro" id="IPR057031">
    <property type="entry name" value="SCAF11-like_C"/>
</dbReference>
<dbReference type="PANTHER" id="PTHR47013">
    <property type="entry name" value="SPLICING FACTOR, ARGININE/SERINE-RICH 19"/>
    <property type="match status" value="1"/>
</dbReference>
<dbReference type="PANTHER" id="PTHR47013:SF1">
    <property type="entry name" value="SPLICING FACTOR, ARGININE_SERINE-RICH 19"/>
    <property type="match status" value="1"/>
</dbReference>
<dbReference type="Pfam" id="PF23030">
    <property type="entry name" value="SCAF11-like_C"/>
    <property type="match status" value="1"/>
</dbReference>
<feature type="chain" id="PRO_0000299408" description="Splicing factor, arginine/serine-rich 19">
    <location>
        <begin position="1"/>
        <end position="1258"/>
    </location>
</feature>
<feature type="region of interest" description="Disordered" evidence="4">
    <location>
        <begin position="1"/>
        <end position="32"/>
    </location>
</feature>
<feature type="region of interest" description="Disordered" evidence="4">
    <location>
        <begin position="159"/>
        <end position="345"/>
    </location>
</feature>
<feature type="region of interest" description="Disordered" evidence="4">
    <location>
        <begin position="370"/>
        <end position="398"/>
    </location>
</feature>
<feature type="region of interest" description="Disordered" evidence="4">
    <location>
        <begin position="410"/>
        <end position="1034"/>
    </location>
</feature>
<feature type="region of interest" description="Disordered" evidence="4">
    <location>
        <begin position="1114"/>
        <end position="1154"/>
    </location>
</feature>
<feature type="region of interest" description="Necessary for interaction with the CTD domain of POLR2A" evidence="1">
    <location>
        <begin position="1133"/>
        <end position="1258"/>
    </location>
</feature>
<feature type="region of interest" description="Disordered" evidence="4">
    <location>
        <begin position="1223"/>
        <end position="1258"/>
    </location>
</feature>
<feature type="compositionally biased region" description="Basic and acidic residues" evidence="4">
    <location>
        <begin position="7"/>
        <end position="27"/>
    </location>
</feature>
<feature type="compositionally biased region" description="Low complexity" evidence="4">
    <location>
        <begin position="193"/>
        <end position="207"/>
    </location>
</feature>
<feature type="compositionally biased region" description="Pro residues" evidence="4">
    <location>
        <begin position="208"/>
        <end position="223"/>
    </location>
</feature>
<feature type="compositionally biased region" description="Basic and acidic residues" evidence="4">
    <location>
        <begin position="228"/>
        <end position="237"/>
    </location>
</feature>
<feature type="compositionally biased region" description="Polar residues" evidence="4">
    <location>
        <begin position="256"/>
        <end position="266"/>
    </location>
</feature>
<feature type="compositionally biased region" description="Acidic residues" evidence="4">
    <location>
        <begin position="269"/>
        <end position="283"/>
    </location>
</feature>
<feature type="compositionally biased region" description="Pro residues" evidence="4">
    <location>
        <begin position="374"/>
        <end position="383"/>
    </location>
</feature>
<feature type="compositionally biased region" description="Acidic residues" evidence="4">
    <location>
        <begin position="384"/>
        <end position="395"/>
    </location>
</feature>
<feature type="compositionally biased region" description="Low complexity" evidence="4">
    <location>
        <begin position="414"/>
        <end position="426"/>
    </location>
</feature>
<feature type="compositionally biased region" description="Basic residues" evidence="4">
    <location>
        <begin position="480"/>
        <end position="491"/>
    </location>
</feature>
<feature type="compositionally biased region" description="Basic residues" evidence="4">
    <location>
        <begin position="540"/>
        <end position="555"/>
    </location>
</feature>
<feature type="compositionally biased region" description="Basic residues" evidence="4">
    <location>
        <begin position="562"/>
        <end position="579"/>
    </location>
</feature>
<feature type="compositionally biased region" description="Basic residues" evidence="4">
    <location>
        <begin position="594"/>
        <end position="613"/>
    </location>
</feature>
<feature type="compositionally biased region" description="Basic and acidic residues" evidence="4">
    <location>
        <begin position="614"/>
        <end position="625"/>
    </location>
</feature>
<feature type="compositionally biased region" description="Basic and acidic residues" evidence="4">
    <location>
        <begin position="698"/>
        <end position="711"/>
    </location>
</feature>
<feature type="compositionally biased region" description="Basic and acidic residues" evidence="4">
    <location>
        <begin position="721"/>
        <end position="743"/>
    </location>
</feature>
<feature type="compositionally biased region" description="Low complexity" evidence="4">
    <location>
        <begin position="752"/>
        <end position="777"/>
    </location>
</feature>
<feature type="compositionally biased region" description="Low complexity" evidence="4">
    <location>
        <begin position="795"/>
        <end position="806"/>
    </location>
</feature>
<feature type="compositionally biased region" description="Basic and acidic residues" evidence="4">
    <location>
        <begin position="815"/>
        <end position="833"/>
    </location>
</feature>
<feature type="compositionally biased region" description="Basic residues" evidence="4">
    <location>
        <begin position="845"/>
        <end position="877"/>
    </location>
</feature>
<feature type="compositionally biased region" description="Pro residues" evidence="4">
    <location>
        <begin position="924"/>
        <end position="937"/>
    </location>
</feature>
<feature type="compositionally biased region" description="Polar residues" evidence="4">
    <location>
        <begin position="940"/>
        <end position="949"/>
    </location>
</feature>
<feature type="compositionally biased region" description="Acidic residues" evidence="4">
    <location>
        <begin position="971"/>
        <end position="986"/>
    </location>
</feature>
<feature type="compositionally biased region" description="Low complexity" evidence="4">
    <location>
        <begin position="987"/>
        <end position="1019"/>
    </location>
</feature>
<feature type="compositionally biased region" description="Basic and acidic residues" evidence="4">
    <location>
        <begin position="1135"/>
        <end position="1154"/>
    </location>
</feature>
<feature type="compositionally biased region" description="Pro residues" evidence="4">
    <location>
        <begin position="1246"/>
        <end position="1258"/>
    </location>
</feature>
<feature type="modified residue" description="Phosphoserine" evidence="7">
    <location>
        <position position="241"/>
    </location>
</feature>
<feature type="modified residue" description="Phosphothreonine" evidence="3">
    <location>
        <position position="329"/>
    </location>
</feature>
<feature type="modified residue" description="Phosphoserine" evidence="3">
    <location>
        <position position="444"/>
    </location>
</feature>
<feature type="modified residue" description="Phosphoserine" evidence="3">
    <location>
        <position position="449"/>
    </location>
</feature>
<feature type="modified residue" description="Phosphoserine" evidence="3">
    <location>
        <position position="493"/>
    </location>
</feature>
<feature type="modified residue" description="Phosphoserine" evidence="3">
    <location>
        <position position="495"/>
    </location>
</feature>
<feature type="modified residue" description="Phosphoserine" evidence="7">
    <location>
        <position position="512"/>
    </location>
</feature>
<feature type="modified residue" description="Phosphoserine" evidence="7">
    <location>
        <position position="520"/>
    </location>
</feature>
<feature type="modified residue" description="Phosphoserine" evidence="3">
    <location>
        <position position="579"/>
    </location>
</feature>
<feature type="modified residue" description="Phosphoserine" evidence="3">
    <location>
        <position position="581"/>
    </location>
</feature>
<feature type="modified residue" description="Phosphothreonine" evidence="3">
    <location>
        <position position="665"/>
    </location>
</feature>
<feature type="modified residue" description="Phosphoserine" evidence="7">
    <location>
        <position position="678"/>
    </location>
</feature>
<feature type="modified residue" description="Phosphoserine" evidence="7">
    <location>
        <position position="684"/>
    </location>
</feature>
<feature type="modified residue" description="Phosphotyrosine" evidence="3">
    <location>
        <position position="691"/>
    </location>
</feature>
<feature type="modified residue" description="Phosphoserine" evidence="7">
    <location>
        <position position="693"/>
    </location>
</feature>
<feature type="modified residue" description="Phosphoserine" evidence="7">
    <location>
        <position position="697"/>
    </location>
</feature>
<feature type="modified residue" description="Phosphoserine" evidence="3">
    <location>
        <position position="821"/>
    </location>
</feature>
<feature type="modified residue" description="Phosphoserine" evidence="3">
    <location>
        <position position="823"/>
    </location>
</feature>
<feature type="modified residue" description="Phosphoserine" evidence="3">
    <location>
        <position position="878"/>
    </location>
</feature>
<feature type="modified residue" description="Phosphoserine" evidence="3">
    <location>
        <position position="885"/>
    </location>
</feature>
<feature type="modified residue" description="Phosphoserine" evidence="2">
    <location>
        <position position="912"/>
    </location>
</feature>
<feature type="modified residue" description="Phosphoserine" evidence="7">
    <location>
        <position position="914"/>
    </location>
</feature>
<feature type="modified residue" description="Phosphothreonine" evidence="3">
    <location>
        <position position="925"/>
    </location>
</feature>
<feature type="modified residue" description="Phosphothreonine" evidence="3">
    <location>
        <position position="938"/>
    </location>
</feature>
<feature type="modified residue" description="Phosphoserine" evidence="2">
    <location>
        <position position="941"/>
    </location>
</feature>
<feature type="modified residue" description="Phosphothreonine" evidence="7">
    <location>
        <position position="950"/>
    </location>
</feature>
<feature type="cross-link" description="Glycyl lysine isopeptide (Lys-Gly) (interchain with G-Cter in SUMO2)" evidence="3">
    <location>
        <position position="814"/>
    </location>
</feature>
<feature type="sequence conflict" description="In Ref. 2; AAC52657." evidence="6" ref="2">
    <original>L</original>
    <variation>V</variation>
    <location>
        <position position="101"/>
    </location>
</feature>
<feature type="sequence conflict" description="In Ref. 2; AAC52657." evidence="6" ref="2">
    <original>A</original>
    <variation>G</variation>
    <location>
        <position position="195"/>
    </location>
</feature>
<feature type="sequence conflict" description="In Ref. 2; AAC52657." evidence="6" ref="2">
    <original>P</original>
    <variation>A</variation>
    <location>
        <position position="255"/>
    </location>
</feature>
<feature type="sequence conflict" description="In Ref. 2; AAC52657." evidence="6" ref="2">
    <original>A</original>
    <variation>G</variation>
    <location>
        <position position="264"/>
    </location>
</feature>
<feature type="sequence conflict" description="In Ref. 2; AAC52657." evidence="6" ref="2">
    <original>S</original>
    <variation>R</variation>
    <location>
        <position position="289"/>
    </location>
</feature>
<feature type="sequence conflict" description="In Ref. 2; AAC52657." evidence="6" ref="2">
    <original>R</original>
    <variation>G</variation>
    <location>
        <position position="687"/>
    </location>
</feature>
<feature type="sequence conflict" description="In Ref. 2; AAC52657." evidence="6" ref="2">
    <original>TRP</original>
    <variation>PRT</variation>
    <location>
        <begin position="746"/>
        <end position="748"/>
    </location>
</feature>
<feature type="sequence conflict" description="In Ref. 2; AAC52657." evidence="6" ref="2">
    <original>S</original>
    <variation>R</variation>
    <location>
        <position position="765"/>
    </location>
</feature>
<feature type="sequence conflict" description="In Ref. 2; AAC52657." evidence="6" ref="2">
    <original>A</original>
    <variation>S</variation>
    <location>
        <position position="832"/>
    </location>
</feature>
<feature type="sequence conflict" description="In Ref. 2; AAC52657." evidence="6" ref="2">
    <original>E</original>
    <variation>D</variation>
    <location>
        <position position="952"/>
    </location>
</feature>
<feature type="sequence conflict" description="In Ref. 2; AAC52657." evidence="6" ref="2">
    <original>P</original>
    <variation>A</variation>
    <location>
        <position position="957"/>
    </location>
</feature>
<feature type="sequence conflict" description="In Ref. 2; AAC52657." evidence="6" ref="2">
    <original>A</original>
    <variation>D</variation>
    <location>
        <position position="1076"/>
    </location>
</feature>
<feature type="sequence conflict" description="In Ref. 2; AAC52657." evidence="6" ref="2">
    <original>S</original>
    <variation>R</variation>
    <location>
        <position position="1082"/>
    </location>
</feature>
<feature type="sequence conflict" description="In Ref. 2; AAC52657." evidence="6" ref="2">
    <original>L</original>
    <variation>F</variation>
    <location>
        <position position="1101"/>
    </location>
</feature>
<feature type="sequence conflict" description="In Ref. 2; AAC52657." evidence="6" ref="2">
    <original>G</original>
    <variation>A</variation>
    <location>
        <position position="1106"/>
    </location>
</feature>
<feature type="sequence conflict" description="In Ref. 2; AAC52657." evidence="6" ref="2">
    <original>A</original>
    <variation>S</variation>
    <location>
        <position position="1170"/>
    </location>
</feature>
<gene>
    <name type="primary">Scaf1</name>
    <name type="synonym">Sfrs19</name>
</gene>
<protein>
    <recommendedName>
        <fullName>Splicing factor, arginine/serine-rich 19</fullName>
    </recommendedName>
    <alternativeName>
        <fullName>CTD-binding SR-like protein rA1</fullName>
    </alternativeName>
    <alternativeName>
        <fullName>SR-related and CTD-associated factor 1</fullName>
    </alternativeName>
</protein>